<proteinExistence type="inferred from homology"/>
<accession>A9NGP8</accession>
<keyword id="KW-0963">Cytoplasm</keyword>
<keyword id="KW-0489">Methyltransferase</keyword>
<keyword id="KW-1185">Reference proteome</keyword>
<keyword id="KW-0698">rRNA processing</keyword>
<keyword id="KW-0949">S-adenosyl-L-methionine</keyword>
<keyword id="KW-0808">Transferase</keyword>
<reference key="1">
    <citation type="journal article" date="2011" name="J. Bacteriol.">
        <title>Complete genome and proteome of Acholeplasma laidlawii.</title>
        <authorList>
            <person name="Lazarev V.N."/>
            <person name="Levitskii S.A."/>
            <person name="Basovskii Y.I."/>
            <person name="Chukin M.M."/>
            <person name="Akopian T.A."/>
            <person name="Vereshchagin V.V."/>
            <person name="Kostrjukova E.S."/>
            <person name="Kovaleva G.Y."/>
            <person name="Kazanov M.D."/>
            <person name="Malko D.B."/>
            <person name="Vitreschak A.G."/>
            <person name="Sernova N.V."/>
            <person name="Gelfand M.S."/>
            <person name="Demina I.A."/>
            <person name="Serebryakova M.V."/>
            <person name="Galyamina M.A."/>
            <person name="Vtyurin N.N."/>
            <person name="Rogov S.I."/>
            <person name="Alexeev D.G."/>
            <person name="Ladygina V.G."/>
            <person name="Govorun V.M."/>
        </authorList>
    </citation>
    <scope>NUCLEOTIDE SEQUENCE [LARGE SCALE GENOMIC DNA]</scope>
    <source>
        <strain>PG-8A</strain>
    </source>
</reference>
<comment type="function">
    <text evidence="1">Specifically methylates the N4 position of cytidine in position 1402 (C1402) of 16S rRNA.</text>
</comment>
<comment type="catalytic activity">
    <reaction evidence="1">
        <text>cytidine(1402) in 16S rRNA + S-adenosyl-L-methionine = N(4)-methylcytidine(1402) in 16S rRNA + S-adenosyl-L-homocysteine + H(+)</text>
        <dbReference type="Rhea" id="RHEA:42928"/>
        <dbReference type="Rhea" id="RHEA-COMP:10286"/>
        <dbReference type="Rhea" id="RHEA-COMP:10287"/>
        <dbReference type="ChEBI" id="CHEBI:15378"/>
        <dbReference type="ChEBI" id="CHEBI:57856"/>
        <dbReference type="ChEBI" id="CHEBI:59789"/>
        <dbReference type="ChEBI" id="CHEBI:74506"/>
        <dbReference type="ChEBI" id="CHEBI:82748"/>
        <dbReference type="EC" id="2.1.1.199"/>
    </reaction>
</comment>
<comment type="subcellular location">
    <subcellularLocation>
        <location evidence="1">Cytoplasm</location>
    </subcellularLocation>
</comment>
<comment type="similarity">
    <text evidence="1">Belongs to the methyltransferase superfamily. RsmH family.</text>
</comment>
<organism>
    <name type="scientific">Acholeplasma laidlawii (strain PG-8A)</name>
    <dbReference type="NCBI Taxonomy" id="441768"/>
    <lineage>
        <taxon>Bacteria</taxon>
        <taxon>Bacillati</taxon>
        <taxon>Mycoplasmatota</taxon>
        <taxon>Mollicutes</taxon>
        <taxon>Acholeplasmatales</taxon>
        <taxon>Acholeplasmataceae</taxon>
        <taxon>Acholeplasma</taxon>
    </lineage>
</organism>
<evidence type="ECO:0000255" key="1">
    <source>
        <dbReference type="HAMAP-Rule" id="MF_01007"/>
    </source>
</evidence>
<gene>
    <name evidence="1" type="primary">rsmH2</name>
    <name type="synonym">mraW2</name>
    <name type="ordered locus">ACL_0915</name>
</gene>
<protein>
    <recommendedName>
        <fullName evidence="1">Ribosomal RNA small subunit methyltransferase H 2</fullName>
        <ecNumber evidence="1">2.1.1.199</ecNumber>
    </recommendedName>
    <alternativeName>
        <fullName evidence="1">16S rRNA m(4)C1402 methyltransferase 2</fullName>
    </alternativeName>
    <alternativeName>
        <fullName evidence="1">rRNA (cytosine-N(4)-)-methyltransferase RsmH 2</fullName>
    </alternativeName>
</protein>
<name>RSMH2_ACHLI</name>
<sequence length="344" mass="39450">MEENKRVRRKRYSGLYPKKYNEKYKEKNPEKYKETIQKVMKKGNTPAGMHRSIMVDEILHFFDIKLGQVGIDLTTGFGGHSKEILKKLNHTGHLHGIDQDPIELPKTRARLESYGFNKDNFTLHQLNFKDFDAIDTEGFDFILADLGVSSMQIDNPDRGFTFREEGPLDLRMNPNVGIPAYVRLLEMSEIEIEHMLIENADEIYAKEIAKEITKAKIQGRYIRTTLDLHQVIASALQKVSKKVYEEELKKASSRTFQALRIDVNSEYEVLFEMLDKLPGKLNPGGKVAILSFHSGEDRLVKKAFKQYLNDGVFSMTEGPILPSKEEVFNNPRARSAKLRIAIKG</sequence>
<dbReference type="EC" id="2.1.1.199" evidence="1"/>
<dbReference type="EMBL" id="CP000896">
    <property type="protein sequence ID" value="ABX81528.1"/>
    <property type="molecule type" value="Genomic_DNA"/>
</dbReference>
<dbReference type="RefSeq" id="WP_012242859.1">
    <property type="nucleotide sequence ID" value="NC_010163.1"/>
</dbReference>
<dbReference type="SMR" id="A9NGP8"/>
<dbReference type="STRING" id="441768.ACL_0915"/>
<dbReference type="GeneID" id="41339066"/>
<dbReference type="KEGG" id="acl:ACL_0915"/>
<dbReference type="eggNOG" id="COG0275">
    <property type="taxonomic scope" value="Bacteria"/>
</dbReference>
<dbReference type="HOGENOM" id="CLU_038422_1_1_14"/>
<dbReference type="OrthoDB" id="9806637at2"/>
<dbReference type="Proteomes" id="UP000008558">
    <property type="component" value="Chromosome"/>
</dbReference>
<dbReference type="GO" id="GO:0005737">
    <property type="term" value="C:cytoplasm"/>
    <property type="evidence" value="ECO:0007669"/>
    <property type="project" value="UniProtKB-SubCell"/>
</dbReference>
<dbReference type="GO" id="GO:0071424">
    <property type="term" value="F:rRNA (cytosine-N4-)-methyltransferase activity"/>
    <property type="evidence" value="ECO:0007669"/>
    <property type="project" value="UniProtKB-UniRule"/>
</dbReference>
<dbReference type="GO" id="GO:0070475">
    <property type="term" value="P:rRNA base methylation"/>
    <property type="evidence" value="ECO:0007669"/>
    <property type="project" value="UniProtKB-UniRule"/>
</dbReference>
<dbReference type="Gene3D" id="1.10.150.170">
    <property type="entry name" value="Putative methyltransferase TM0872, insert domain"/>
    <property type="match status" value="1"/>
</dbReference>
<dbReference type="Gene3D" id="3.40.50.150">
    <property type="entry name" value="Vaccinia Virus protein VP39"/>
    <property type="match status" value="1"/>
</dbReference>
<dbReference type="HAMAP" id="MF_01007">
    <property type="entry name" value="16SrRNA_methyltr_H"/>
    <property type="match status" value="1"/>
</dbReference>
<dbReference type="InterPro" id="IPR002903">
    <property type="entry name" value="RsmH"/>
</dbReference>
<dbReference type="InterPro" id="IPR023397">
    <property type="entry name" value="SAM-dep_MeTrfase_MraW_recog"/>
</dbReference>
<dbReference type="InterPro" id="IPR029063">
    <property type="entry name" value="SAM-dependent_MTases_sf"/>
</dbReference>
<dbReference type="NCBIfam" id="TIGR00006">
    <property type="entry name" value="16S rRNA (cytosine(1402)-N(4))-methyltransferase RsmH"/>
    <property type="match status" value="1"/>
</dbReference>
<dbReference type="PANTHER" id="PTHR11265:SF0">
    <property type="entry name" value="12S RRNA N4-METHYLCYTIDINE METHYLTRANSFERASE"/>
    <property type="match status" value="1"/>
</dbReference>
<dbReference type="PANTHER" id="PTHR11265">
    <property type="entry name" value="S-ADENOSYL-METHYLTRANSFERASE MRAW"/>
    <property type="match status" value="1"/>
</dbReference>
<dbReference type="Pfam" id="PF01795">
    <property type="entry name" value="Methyltransf_5"/>
    <property type="match status" value="1"/>
</dbReference>
<dbReference type="PIRSF" id="PIRSF004486">
    <property type="entry name" value="MraW"/>
    <property type="match status" value="1"/>
</dbReference>
<dbReference type="SUPFAM" id="SSF81799">
    <property type="entry name" value="Putative methyltransferase TM0872, insert domain"/>
    <property type="match status" value="1"/>
</dbReference>
<dbReference type="SUPFAM" id="SSF53335">
    <property type="entry name" value="S-adenosyl-L-methionine-dependent methyltransferases"/>
    <property type="match status" value="1"/>
</dbReference>
<feature type="chain" id="PRO_0000386679" description="Ribosomal RNA small subunit methyltransferase H 2">
    <location>
        <begin position="1"/>
        <end position="344"/>
    </location>
</feature>
<feature type="binding site" evidence="1">
    <location>
        <begin position="78"/>
        <end position="80"/>
    </location>
    <ligand>
        <name>S-adenosyl-L-methionine</name>
        <dbReference type="ChEBI" id="CHEBI:59789"/>
    </ligand>
</feature>
<feature type="binding site" evidence="1">
    <location>
        <position position="98"/>
    </location>
    <ligand>
        <name>S-adenosyl-L-methionine</name>
        <dbReference type="ChEBI" id="CHEBI:59789"/>
    </ligand>
</feature>
<feature type="binding site" evidence="1">
    <location>
        <position position="131"/>
    </location>
    <ligand>
        <name>S-adenosyl-L-methionine</name>
        <dbReference type="ChEBI" id="CHEBI:59789"/>
    </ligand>
</feature>
<feature type="binding site" evidence="1">
    <location>
        <position position="145"/>
    </location>
    <ligand>
        <name>S-adenosyl-L-methionine</name>
        <dbReference type="ChEBI" id="CHEBI:59789"/>
    </ligand>
</feature>
<feature type="binding site" evidence="1">
    <location>
        <position position="152"/>
    </location>
    <ligand>
        <name>S-adenosyl-L-methionine</name>
        <dbReference type="ChEBI" id="CHEBI:59789"/>
    </ligand>
</feature>